<reference key="1">
    <citation type="submission" date="2004-06" db="EMBL/GenBank/DDBJ databases">
        <authorList>
            <consortium name="NIH - Xenopus Gene Collection (XGC) project"/>
        </authorList>
    </citation>
    <scope>NUCLEOTIDE SEQUENCE [LARGE SCALE MRNA]</scope>
    <source>
        <tissue>Embryo</tissue>
    </source>
</reference>
<sequence>MSRHEGVSCDACLKGNFRGRRYKCLICYDYDLCASCYESGATTTRHTTDHPMQCILTRVDFDLYYGGEAFSVEQPQSFTCPYCGKMGYTETSLQEHVTSEHAETSTEVICPICAALPGGDPNHVTDDFAAHLTLEHRAPRDLDESSGVRHVRRMFHPGRGLGGPRARRTNMHFTSSSTGGLSSSQSSYSPSNREAMDPIAELLSQLSGVRRSTGGQLNSSGPSASQLQQLQMQLQLERQQAQAARQQLETARNATRRNNASNVTTTITQSTAATNTSSTENNQQSIQNSQFLLTRLNDPKMTEAERQSIESERADRSLFVQELLLSTLMQEESSSSDEDERGEIADFGAMGCVDIMPLDVALENLNLKESNKGNEPPPPPL</sequence>
<comment type="function">
    <text evidence="1">E3 ubiquitin-protein ligase which accepts ubiquitin from an E2 ubiquitin-conjugating enzyme and then transfers it to targeted substrates, promoting their degradation by the proteasome. Together with UBR4, component of the N-end rule pathway: ubiquitinates proteins bearing specific N-terminal residues that are destabilizing according to the N-end rule, leading to their degradation. Does not ubiquitinate proteins that are acetylated at the N-terminus. Together with ubr4, part of a protein quality control pathway that catalyzes ubiquitination and degradation of proteins that have been oxidized in response to reactive oxygen species (ROS): recognizes proteins with an Arg-CysO3(H) degron at the N-terminus, and mediates assembly of heterotypic 'Lys-63'-/'Lys-27'-linked branched ubiquitin chains on oxidized proteins, leading to their degradation by autophagy. Catalytic component of the SIFI complex, a multiprotein complex required to inhibit the mitochondrial stress response after a specific stress event has been resolved: ubiquitinates and degrades (1) components of the HRI-mediated signaling of the integrated stress response, such as dele1 and eif2ak1/hri, as well as (2) unimported mitochondrial precursors. Within the SIFI complex, ubr4 initiates ubiquitin chain that are further elongated or branched by kcmf1.</text>
</comment>
<comment type="catalytic activity">
    <reaction evidence="1">
        <text>S-ubiquitinyl-[E2 ubiquitin-conjugating enzyme]-L-cysteine + [acceptor protein]-L-lysine = [E2 ubiquitin-conjugating enzyme]-L-cysteine + N(6)-ubiquitinyl-[acceptor protein]-L-lysine.</text>
        <dbReference type="EC" id="2.3.2.27"/>
    </reaction>
</comment>
<comment type="pathway">
    <text evidence="1">Protein modification; protein ubiquitination.</text>
</comment>
<comment type="subunit">
    <text evidence="1">Component of the SIFI complex, composed of kcmf1, ubr4 and calmodulin.</text>
</comment>
<comment type="subcellular location">
    <subcellularLocation>
        <location evidence="1">Cytoplasm</location>
    </subcellularLocation>
    <subcellularLocation>
        <location evidence="1">Late endosome</location>
    </subcellularLocation>
    <subcellularLocation>
        <location evidence="1">Lysosome</location>
    </subcellularLocation>
</comment>
<comment type="similarity">
    <text evidence="6">Belongs to the KCMF1 family.</text>
</comment>
<evidence type="ECO:0000250" key="1">
    <source>
        <dbReference type="UniProtKB" id="Q9P0J7"/>
    </source>
</evidence>
<evidence type="ECO:0000255" key="2"/>
<evidence type="ECO:0000255" key="3">
    <source>
        <dbReference type="PROSITE-ProRule" id="PRU00042"/>
    </source>
</evidence>
<evidence type="ECO:0000255" key="4">
    <source>
        <dbReference type="PROSITE-ProRule" id="PRU00228"/>
    </source>
</evidence>
<evidence type="ECO:0000256" key="5">
    <source>
        <dbReference type="SAM" id="MobiDB-lite"/>
    </source>
</evidence>
<evidence type="ECO:0000305" key="6"/>
<organism>
    <name type="scientific">Xenopus laevis</name>
    <name type="common">African clawed frog</name>
    <dbReference type="NCBI Taxonomy" id="8355"/>
    <lineage>
        <taxon>Eukaryota</taxon>
        <taxon>Metazoa</taxon>
        <taxon>Chordata</taxon>
        <taxon>Craniata</taxon>
        <taxon>Vertebrata</taxon>
        <taxon>Euteleostomi</taxon>
        <taxon>Amphibia</taxon>
        <taxon>Batrachia</taxon>
        <taxon>Anura</taxon>
        <taxon>Pipoidea</taxon>
        <taxon>Pipidae</taxon>
        <taxon>Xenopodinae</taxon>
        <taxon>Xenopus</taxon>
        <taxon>Xenopus</taxon>
    </lineage>
</organism>
<keyword id="KW-0175">Coiled coil</keyword>
<keyword id="KW-0963">Cytoplasm</keyword>
<keyword id="KW-0967">Endosome</keyword>
<keyword id="KW-0458">Lysosome</keyword>
<keyword id="KW-0479">Metal-binding</keyword>
<keyword id="KW-1185">Reference proteome</keyword>
<keyword id="KW-0808">Transferase</keyword>
<keyword id="KW-0833">Ubl conjugation pathway</keyword>
<keyword id="KW-0862">Zinc</keyword>
<keyword id="KW-0863">Zinc-finger</keyword>
<gene>
    <name type="primary">kcmf1</name>
</gene>
<protein>
    <recommendedName>
        <fullName evidence="6">E3 ubiquitin-protein ligase KCMF1</fullName>
        <ecNumber evidence="1">2.3.2.27</ecNumber>
    </recommendedName>
</protein>
<dbReference type="EC" id="2.3.2.27" evidence="1"/>
<dbReference type="EMBL" id="BC073225">
    <property type="protein sequence ID" value="AAH73225.1"/>
    <property type="molecule type" value="mRNA"/>
</dbReference>
<dbReference type="RefSeq" id="NP_001085703.1">
    <property type="nucleotide sequence ID" value="NM_001092234.1"/>
</dbReference>
<dbReference type="SMR" id="Q6GPB6"/>
<dbReference type="BioGRID" id="102292">
    <property type="interactions" value="1"/>
</dbReference>
<dbReference type="IntAct" id="Q6GPB6">
    <property type="interactions" value="1"/>
</dbReference>
<dbReference type="DNASU" id="444129"/>
<dbReference type="GeneID" id="444129"/>
<dbReference type="KEGG" id="xla:444129"/>
<dbReference type="AGR" id="Xenbase:XB-GENE-1021681"/>
<dbReference type="CTD" id="444129"/>
<dbReference type="Xenbase" id="XB-GENE-1021681">
    <property type="gene designation" value="kcmf1.L"/>
</dbReference>
<dbReference type="OrthoDB" id="7873042at2759"/>
<dbReference type="UniPathway" id="UPA00143"/>
<dbReference type="Proteomes" id="UP000186698">
    <property type="component" value="Chromosome 1L"/>
</dbReference>
<dbReference type="Bgee" id="444129">
    <property type="expression patterns" value="Expressed in muscle tissue and 19 other cell types or tissues"/>
</dbReference>
<dbReference type="GO" id="GO:0005770">
    <property type="term" value="C:late endosome"/>
    <property type="evidence" value="ECO:0007669"/>
    <property type="project" value="UniProtKB-SubCell"/>
</dbReference>
<dbReference type="GO" id="GO:0005764">
    <property type="term" value="C:lysosome"/>
    <property type="evidence" value="ECO:0007669"/>
    <property type="project" value="UniProtKB-SubCell"/>
</dbReference>
<dbReference type="GO" id="GO:0005886">
    <property type="term" value="C:plasma membrane"/>
    <property type="evidence" value="ECO:0000318"/>
    <property type="project" value="GO_Central"/>
</dbReference>
<dbReference type="GO" id="GO:0045202">
    <property type="term" value="C:synapse"/>
    <property type="evidence" value="ECO:0007669"/>
    <property type="project" value="GOC"/>
</dbReference>
<dbReference type="GO" id="GO:0016740">
    <property type="term" value="F:transferase activity"/>
    <property type="evidence" value="ECO:0007669"/>
    <property type="project" value="UniProtKB-KW"/>
</dbReference>
<dbReference type="GO" id="GO:0008270">
    <property type="term" value="F:zinc ion binding"/>
    <property type="evidence" value="ECO:0007669"/>
    <property type="project" value="UniProtKB-KW"/>
</dbReference>
<dbReference type="GO" id="GO:0141191">
    <property type="term" value="P:negative regulation of HRI-mediated signaling"/>
    <property type="evidence" value="ECO:0000250"/>
    <property type="project" value="UniProtKB"/>
</dbReference>
<dbReference type="GO" id="GO:0070534">
    <property type="term" value="P:protein K63-linked ubiquitination"/>
    <property type="evidence" value="ECO:0000250"/>
    <property type="project" value="UniProtKB"/>
</dbReference>
<dbReference type="GO" id="GO:0099536">
    <property type="term" value="P:synaptic signaling"/>
    <property type="evidence" value="ECO:0000318"/>
    <property type="project" value="GO_Central"/>
</dbReference>
<dbReference type="CDD" id="cd02338">
    <property type="entry name" value="ZZ_PCMF_like"/>
    <property type="match status" value="1"/>
</dbReference>
<dbReference type="FunFam" id="3.30.60.90:FF:000017">
    <property type="entry name" value="E3 ubiquitin-protein ligase KCMF1"/>
    <property type="match status" value="1"/>
</dbReference>
<dbReference type="Gene3D" id="3.30.60.90">
    <property type="match status" value="1"/>
</dbReference>
<dbReference type="InterPro" id="IPR008598">
    <property type="entry name" value="Di19_Zn-bd"/>
</dbReference>
<dbReference type="InterPro" id="IPR050774">
    <property type="entry name" value="KCMF1/Dystrophin"/>
</dbReference>
<dbReference type="InterPro" id="IPR013087">
    <property type="entry name" value="Znf_C2H2_type"/>
</dbReference>
<dbReference type="InterPro" id="IPR000433">
    <property type="entry name" value="Znf_ZZ"/>
</dbReference>
<dbReference type="InterPro" id="IPR043145">
    <property type="entry name" value="Znf_ZZ_sf"/>
</dbReference>
<dbReference type="PANTHER" id="PTHR12268">
    <property type="entry name" value="E3 UBIQUITIN-PROTEIN LIGASE KCMF1"/>
    <property type="match status" value="1"/>
</dbReference>
<dbReference type="PANTHER" id="PTHR12268:SF13">
    <property type="entry name" value="E3 UBIQUITIN-PROTEIN LIGASE KCMF1"/>
    <property type="match status" value="1"/>
</dbReference>
<dbReference type="Pfam" id="PF05605">
    <property type="entry name" value="zf-Di19"/>
    <property type="match status" value="1"/>
</dbReference>
<dbReference type="Pfam" id="PF00569">
    <property type="entry name" value="ZZ"/>
    <property type="match status" value="1"/>
</dbReference>
<dbReference type="SMART" id="SM00355">
    <property type="entry name" value="ZnF_C2H2"/>
    <property type="match status" value="1"/>
</dbReference>
<dbReference type="SMART" id="SM00291">
    <property type="entry name" value="ZnF_ZZ"/>
    <property type="match status" value="1"/>
</dbReference>
<dbReference type="SUPFAM" id="SSF57850">
    <property type="entry name" value="RING/U-box"/>
    <property type="match status" value="1"/>
</dbReference>
<dbReference type="PROSITE" id="PS01357">
    <property type="entry name" value="ZF_ZZ_1"/>
    <property type="match status" value="1"/>
</dbReference>
<dbReference type="PROSITE" id="PS50135">
    <property type="entry name" value="ZF_ZZ_2"/>
    <property type="match status" value="1"/>
</dbReference>
<dbReference type="PROSITE" id="PS50157">
    <property type="entry name" value="ZINC_FINGER_C2H2_2"/>
    <property type="match status" value="1"/>
</dbReference>
<name>KCMF1_XENLA</name>
<proteinExistence type="evidence at transcript level"/>
<feature type="chain" id="PRO_0000349222" description="E3 ubiquitin-protein ligase KCMF1">
    <location>
        <begin position="1"/>
        <end position="381"/>
    </location>
</feature>
<feature type="zinc finger region" description="ZZ-type" evidence="4">
    <location>
        <begin position="4"/>
        <end position="60"/>
    </location>
</feature>
<feature type="zinc finger region" description="C2H2-type" evidence="3">
    <location>
        <begin position="78"/>
        <end position="101"/>
    </location>
</feature>
<feature type="region of interest" description="Disordered" evidence="5">
    <location>
        <begin position="154"/>
        <end position="193"/>
    </location>
</feature>
<feature type="region of interest" description="Disordered" evidence="5">
    <location>
        <begin position="241"/>
        <end position="286"/>
    </location>
</feature>
<feature type="coiled-coil region" evidence="2">
    <location>
        <begin position="223"/>
        <end position="261"/>
    </location>
</feature>
<feature type="compositionally biased region" description="Low complexity" evidence="5">
    <location>
        <begin position="175"/>
        <end position="191"/>
    </location>
</feature>
<feature type="binding site" evidence="4">
    <location>
        <position position="9"/>
    </location>
    <ligand>
        <name>Zn(2+)</name>
        <dbReference type="ChEBI" id="CHEBI:29105"/>
        <label>1</label>
    </ligand>
</feature>
<feature type="binding site" evidence="4">
    <location>
        <position position="12"/>
    </location>
    <ligand>
        <name>Zn(2+)</name>
        <dbReference type="ChEBI" id="CHEBI:29105"/>
        <label>1</label>
    </ligand>
</feature>
<feature type="binding site" evidence="4">
    <location>
        <position position="24"/>
    </location>
    <ligand>
        <name>Zn(2+)</name>
        <dbReference type="ChEBI" id="CHEBI:29105"/>
        <label>2</label>
    </ligand>
</feature>
<feature type="binding site" evidence="4">
    <location>
        <position position="27"/>
    </location>
    <ligand>
        <name>Zn(2+)</name>
        <dbReference type="ChEBI" id="CHEBI:29105"/>
        <label>2</label>
    </ligand>
</feature>
<feature type="binding site" evidence="4">
    <location>
        <position position="33"/>
    </location>
    <ligand>
        <name>Zn(2+)</name>
        <dbReference type="ChEBI" id="CHEBI:29105"/>
        <label>1</label>
    </ligand>
</feature>
<feature type="binding site" evidence="4">
    <location>
        <position position="36"/>
    </location>
    <ligand>
        <name>Zn(2+)</name>
        <dbReference type="ChEBI" id="CHEBI:29105"/>
        <label>1</label>
    </ligand>
</feature>
<feature type="binding site" evidence="4">
    <location>
        <position position="46"/>
    </location>
    <ligand>
        <name>Zn(2+)</name>
        <dbReference type="ChEBI" id="CHEBI:29105"/>
        <label>2</label>
    </ligand>
</feature>
<feature type="binding site" evidence="4">
    <location>
        <position position="50"/>
    </location>
    <ligand>
        <name>Zn(2+)</name>
        <dbReference type="ChEBI" id="CHEBI:29105"/>
        <label>2</label>
    </ligand>
</feature>
<accession>Q6GPB6</accession>